<accession>Q8XXG0</accession>
<keyword id="KW-0240">DNA-directed RNA polymerase</keyword>
<keyword id="KW-0548">Nucleotidyltransferase</keyword>
<keyword id="KW-1185">Reference proteome</keyword>
<keyword id="KW-0804">Transcription</keyword>
<keyword id="KW-0808">Transferase</keyword>
<name>RPOZ_RALN1</name>
<evidence type="ECO:0000255" key="1">
    <source>
        <dbReference type="HAMAP-Rule" id="MF_00366"/>
    </source>
</evidence>
<organism>
    <name type="scientific">Ralstonia nicotianae (strain ATCC BAA-1114 / GMI1000)</name>
    <name type="common">Ralstonia solanacearum</name>
    <dbReference type="NCBI Taxonomy" id="267608"/>
    <lineage>
        <taxon>Bacteria</taxon>
        <taxon>Pseudomonadati</taxon>
        <taxon>Pseudomonadota</taxon>
        <taxon>Betaproteobacteria</taxon>
        <taxon>Burkholderiales</taxon>
        <taxon>Burkholderiaceae</taxon>
        <taxon>Ralstonia</taxon>
        <taxon>Ralstonia solanacearum species complex</taxon>
    </lineage>
</organism>
<proteinExistence type="inferred from homology"/>
<sequence length="67" mass="7388">MARITVEDCLKQIPNRFELALAATYRARQLVQGHTPKVDAKDKPTVTALREIAAGQVGIEMLKKVPS</sequence>
<protein>
    <recommendedName>
        <fullName evidence="1">DNA-directed RNA polymerase subunit omega</fullName>
        <shortName evidence="1">RNAP omega subunit</shortName>
        <ecNumber evidence="1">2.7.7.6</ecNumber>
    </recommendedName>
    <alternativeName>
        <fullName evidence="1">RNA polymerase omega subunit</fullName>
    </alternativeName>
    <alternativeName>
        <fullName evidence="1">Transcriptase subunit omega</fullName>
    </alternativeName>
</protein>
<gene>
    <name evidence="1" type="primary">rpoZ</name>
    <name type="ordered locus">RSc2154</name>
    <name type="ORF">RS01448</name>
</gene>
<comment type="function">
    <text evidence="1">Promotes RNA polymerase assembly. Latches the N- and C-terminal regions of the beta' subunit thereby facilitating its interaction with the beta and alpha subunits.</text>
</comment>
<comment type="catalytic activity">
    <reaction evidence="1">
        <text>RNA(n) + a ribonucleoside 5'-triphosphate = RNA(n+1) + diphosphate</text>
        <dbReference type="Rhea" id="RHEA:21248"/>
        <dbReference type="Rhea" id="RHEA-COMP:14527"/>
        <dbReference type="Rhea" id="RHEA-COMP:17342"/>
        <dbReference type="ChEBI" id="CHEBI:33019"/>
        <dbReference type="ChEBI" id="CHEBI:61557"/>
        <dbReference type="ChEBI" id="CHEBI:140395"/>
        <dbReference type="EC" id="2.7.7.6"/>
    </reaction>
</comment>
<comment type="subunit">
    <text evidence="1">The RNAP catalytic core consists of 2 alpha, 1 beta, 1 beta' and 1 omega subunit. When a sigma factor is associated with the core the holoenzyme is formed, which can initiate transcription.</text>
</comment>
<comment type="similarity">
    <text evidence="1">Belongs to the RNA polymerase subunit omega family.</text>
</comment>
<dbReference type="EC" id="2.7.7.6" evidence="1"/>
<dbReference type="EMBL" id="AL646052">
    <property type="protein sequence ID" value="CAD15861.1"/>
    <property type="molecule type" value="Genomic_DNA"/>
</dbReference>
<dbReference type="RefSeq" id="WP_003262123.1">
    <property type="nucleotide sequence ID" value="NC_003295.1"/>
</dbReference>
<dbReference type="SMR" id="Q8XXG0"/>
<dbReference type="STRING" id="267608.RSc2154"/>
<dbReference type="EnsemblBacteria" id="CAD15861">
    <property type="protein sequence ID" value="CAD15861"/>
    <property type="gene ID" value="RSc2154"/>
</dbReference>
<dbReference type="GeneID" id="97320631"/>
<dbReference type="KEGG" id="rso:RSc2154"/>
<dbReference type="eggNOG" id="COG1758">
    <property type="taxonomic scope" value="Bacteria"/>
</dbReference>
<dbReference type="HOGENOM" id="CLU_125406_5_1_4"/>
<dbReference type="Proteomes" id="UP000001436">
    <property type="component" value="Chromosome"/>
</dbReference>
<dbReference type="GO" id="GO:0000428">
    <property type="term" value="C:DNA-directed RNA polymerase complex"/>
    <property type="evidence" value="ECO:0007669"/>
    <property type="project" value="UniProtKB-KW"/>
</dbReference>
<dbReference type="GO" id="GO:0003677">
    <property type="term" value="F:DNA binding"/>
    <property type="evidence" value="ECO:0007669"/>
    <property type="project" value="UniProtKB-UniRule"/>
</dbReference>
<dbReference type="GO" id="GO:0003899">
    <property type="term" value="F:DNA-directed RNA polymerase activity"/>
    <property type="evidence" value="ECO:0007669"/>
    <property type="project" value="UniProtKB-UniRule"/>
</dbReference>
<dbReference type="GO" id="GO:0006351">
    <property type="term" value="P:DNA-templated transcription"/>
    <property type="evidence" value="ECO:0007669"/>
    <property type="project" value="UniProtKB-UniRule"/>
</dbReference>
<dbReference type="Gene3D" id="3.90.940.10">
    <property type="match status" value="1"/>
</dbReference>
<dbReference type="HAMAP" id="MF_00366">
    <property type="entry name" value="RNApol_bact_RpoZ"/>
    <property type="match status" value="1"/>
</dbReference>
<dbReference type="InterPro" id="IPR003716">
    <property type="entry name" value="DNA-dir_RNA_pol_omega"/>
</dbReference>
<dbReference type="InterPro" id="IPR006110">
    <property type="entry name" value="Pol_omega/Rpo6/RPB6"/>
</dbReference>
<dbReference type="InterPro" id="IPR036161">
    <property type="entry name" value="RPB6/omega-like_sf"/>
</dbReference>
<dbReference type="NCBIfam" id="TIGR00690">
    <property type="entry name" value="rpoZ"/>
    <property type="match status" value="1"/>
</dbReference>
<dbReference type="PANTHER" id="PTHR34476">
    <property type="entry name" value="DNA-DIRECTED RNA POLYMERASE SUBUNIT OMEGA"/>
    <property type="match status" value="1"/>
</dbReference>
<dbReference type="PANTHER" id="PTHR34476:SF1">
    <property type="entry name" value="DNA-DIRECTED RNA POLYMERASE SUBUNIT OMEGA"/>
    <property type="match status" value="1"/>
</dbReference>
<dbReference type="Pfam" id="PF01192">
    <property type="entry name" value="RNA_pol_Rpb6"/>
    <property type="match status" value="1"/>
</dbReference>
<dbReference type="SMART" id="SM01409">
    <property type="entry name" value="RNA_pol_Rpb6"/>
    <property type="match status" value="1"/>
</dbReference>
<dbReference type="SUPFAM" id="SSF63562">
    <property type="entry name" value="RPB6/omega subunit-like"/>
    <property type="match status" value="1"/>
</dbReference>
<reference key="1">
    <citation type="journal article" date="2002" name="Nature">
        <title>Genome sequence of the plant pathogen Ralstonia solanacearum.</title>
        <authorList>
            <person name="Salanoubat M."/>
            <person name="Genin S."/>
            <person name="Artiguenave F."/>
            <person name="Gouzy J."/>
            <person name="Mangenot S."/>
            <person name="Arlat M."/>
            <person name="Billault A."/>
            <person name="Brottier P."/>
            <person name="Camus J.-C."/>
            <person name="Cattolico L."/>
            <person name="Chandler M."/>
            <person name="Choisne N."/>
            <person name="Claudel-Renard C."/>
            <person name="Cunnac S."/>
            <person name="Demange N."/>
            <person name="Gaspin C."/>
            <person name="Lavie M."/>
            <person name="Moisan A."/>
            <person name="Robert C."/>
            <person name="Saurin W."/>
            <person name="Schiex T."/>
            <person name="Siguier P."/>
            <person name="Thebault P."/>
            <person name="Whalen M."/>
            <person name="Wincker P."/>
            <person name="Levy M."/>
            <person name="Weissenbach J."/>
            <person name="Boucher C.A."/>
        </authorList>
    </citation>
    <scope>NUCLEOTIDE SEQUENCE [LARGE SCALE GENOMIC DNA]</scope>
    <source>
        <strain>ATCC BAA-1114 / GMI1000</strain>
    </source>
</reference>
<feature type="chain" id="PRO_0000128966" description="DNA-directed RNA polymerase subunit omega">
    <location>
        <begin position="1"/>
        <end position="67"/>
    </location>
</feature>